<dbReference type="EMBL" id="CY014672">
    <property type="protein sequence ID" value="ABI84535.1"/>
    <property type="molecule type" value="Genomic_RNA"/>
</dbReference>
<dbReference type="SMR" id="Q0A446"/>
<dbReference type="Proteomes" id="UP000008217">
    <property type="component" value="Genome"/>
</dbReference>
<dbReference type="GO" id="GO:0042025">
    <property type="term" value="C:host cell nucleus"/>
    <property type="evidence" value="ECO:0007669"/>
    <property type="project" value="UniProtKB-SubCell"/>
</dbReference>
<dbReference type="GO" id="GO:0016020">
    <property type="term" value="C:membrane"/>
    <property type="evidence" value="ECO:0007669"/>
    <property type="project" value="UniProtKB-KW"/>
</dbReference>
<dbReference type="GO" id="GO:0055036">
    <property type="term" value="C:virion membrane"/>
    <property type="evidence" value="ECO:0007669"/>
    <property type="project" value="UniProtKB-SubCell"/>
</dbReference>
<dbReference type="GO" id="GO:0003723">
    <property type="term" value="F:RNA binding"/>
    <property type="evidence" value="ECO:0007669"/>
    <property type="project" value="UniProtKB-UniRule"/>
</dbReference>
<dbReference type="GO" id="GO:0039660">
    <property type="term" value="F:structural constituent of virion"/>
    <property type="evidence" value="ECO:0007669"/>
    <property type="project" value="UniProtKB-UniRule"/>
</dbReference>
<dbReference type="GO" id="GO:0046761">
    <property type="term" value="P:viral budding from plasma membrane"/>
    <property type="evidence" value="ECO:0007669"/>
    <property type="project" value="UniProtKB-UniRule"/>
</dbReference>
<dbReference type="FunFam" id="1.10.10.180:FF:000001">
    <property type="entry name" value="Matrix protein 1"/>
    <property type="match status" value="1"/>
</dbReference>
<dbReference type="FunFam" id="1.20.91.10:FF:000001">
    <property type="entry name" value="Matrix protein 1"/>
    <property type="match status" value="1"/>
</dbReference>
<dbReference type="Gene3D" id="1.10.10.180">
    <property type="match status" value="1"/>
</dbReference>
<dbReference type="Gene3D" id="1.20.91.10">
    <property type="match status" value="1"/>
</dbReference>
<dbReference type="HAMAP" id="MF_04068">
    <property type="entry name" value="INFV_M1"/>
    <property type="match status" value="1"/>
</dbReference>
<dbReference type="InterPro" id="IPR036039">
    <property type="entry name" value="Flu_matrix_M1"/>
</dbReference>
<dbReference type="InterPro" id="IPR013188">
    <property type="entry name" value="Flu_matrix_M1_C"/>
</dbReference>
<dbReference type="InterPro" id="IPR001561">
    <property type="entry name" value="Flu_matrix_M1_N"/>
</dbReference>
<dbReference type="InterPro" id="IPR015423">
    <property type="entry name" value="Flu_matrix_M1_N_sub1"/>
</dbReference>
<dbReference type="InterPro" id="IPR015799">
    <property type="entry name" value="Flu_matrix_M1_N_sub2"/>
</dbReference>
<dbReference type="InterPro" id="IPR037533">
    <property type="entry name" value="INFV_M1"/>
</dbReference>
<dbReference type="Pfam" id="PF00598">
    <property type="entry name" value="Flu_M1"/>
    <property type="match status" value="1"/>
</dbReference>
<dbReference type="Pfam" id="PF08289">
    <property type="entry name" value="Flu_M1_C"/>
    <property type="match status" value="1"/>
</dbReference>
<dbReference type="SMART" id="SM00759">
    <property type="entry name" value="Flu_M1_C"/>
    <property type="match status" value="1"/>
</dbReference>
<dbReference type="SUPFAM" id="SSF48145">
    <property type="entry name" value="Influenza virus matrix protein M1"/>
    <property type="match status" value="1"/>
</dbReference>
<gene>
    <name evidence="1" type="primary">M</name>
</gene>
<name>M1_I49A1</name>
<keyword id="KW-0025">Alternative splicing</keyword>
<keyword id="KW-1048">Host nucleus</keyword>
<keyword id="KW-0472">Membrane</keyword>
<keyword id="KW-0694">RNA-binding</keyword>
<keyword id="KW-0468">Viral matrix protein</keyword>
<keyword id="KW-0946">Virion</keyword>
<evidence type="ECO:0000255" key="1">
    <source>
        <dbReference type="HAMAP-Rule" id="MF_04068"/>
    </source>
</evidence>
<comment type="function">
    <text evidence="1">Plays critical roles in virus replication, from virus entry and uncoating to assembly and budding of the virus particle. M1 binding to ribonucleocapsids (RNPs) in nucleus seems to inhibit viral transcription. Interaction of viral NEP with M1-RNP is thought to promote nuclear export of the complex, which is targeted to the virion assembly site at the apical plasma membrane in polarized epithelial cells. Interactions with NA and HA may bring M1, a non-raft-associated protein, into lipid rafts. Forms a continuous shell on the inner side of the lipid bilayer in virion, where it binds the RNP. During virus entry into cell, the M2 ion channel acidifies the internal virion core, inducing M1 dissociation from the RNP. M1-free RNPs are transported to the nucleus, where viral transcription and replication can take place.</text>
</comment>
<comment type="function">
    <text evidence="1">Determines the virion's shape: spherical or filamentous. Clinical isolates of influenza are characterized by the presence of significant proportion of filamentous virions, whereas after multiple passage on eggs or cell culture, virions have only spherical morphology. Filamentous virions are thought to be important to infect neighboring cells, and spherical virions more suited to spread through aerosol between hosts organisms.</text>
</comment>
<comment type="subunit">
    <text evidence="1">Homodimer and homomultimer. Interacts with NEP. Binds ribonucleocapsid by both interacting with genomic RNA and NP protein. May interact with HA and NA. Cannot bind NP without genomic RNA.</text>
</comment>
<comment type="subcellular location">
    <subcellularLocation>
        <location evidence="1">Virion membrane</location>
        <topology evidence="1">Peripheral membrane protein</topology>
        <orientation evidence="1">Cytoplasmic side</orientation>
    </subcellularLocation>
    <subcellularLocation>
        <location evidence="1">Host nucleus</location>
    </subcellularLocation>
</comment>
<comment type="alternative products">
    <event type="alternative splicing"/>
    <isoform>
        <id>Q0A446-1</id>
        <name>M1</name>
        <sequence type="displayed"/>
    </isoform>
    <isoform>
        <id>Q0A447-1</id>
        <name>M2</name>
        <sequence type="external"/>
    </isoform>
    <text>Only the first 9 residues are shared by the 2 isoforms.</text>
</comment>
<comment type="miscellaneous">
    <text evidence="1">Most abundant protein in virion. When expressed alone can form virus-like particles in transfected cells.</text>
</comment>
<comment type="similarity">
    <text evidence="1">Belongs to the influenza viruses Matrix protein M1 family.</text>
</comment>
<sequence length="252" mass="27938">MSLLTEVETYVLSIVPSGPLKAEIARRLEDVFAGKNTDLEALMEWLKTRPILSPLTKGILGFVFTLTVPSERGLQRRRFVQNALNGNGDPNNMDRAVKLYRKLKREITFHGAKEVALSYSTGALASCMGLIYNRMGTVTTEVAFGLVCATCEQIADSQHRSHRQMVTTTNPLIRHENRMVLASTTAKAMEQMAGSSEQAAEAMEVASQARQMVQAMRTIGTHPSSSAGLKDDLLENLQAYQKRMGVQMQRFK</sequence>
<feature type="chain" id="PRO_0000326277" description="Matrix protein 1">
    <location>
        <begin position="1"/>
        <end position="252"/>
    </location>
</feature>
<feature type="region of interest" description="Membrane-binding" evidence="1">
    <location>
        <begin position="1"/>
        <end position="164"/>
    </location>
</feature>
<feature type="region of interest" description="RNP-binding" evidence="1">
    <location>
        <begin position="165"/>
        <end position="252"/>
    </location>
</feature>
<feature type="short sequence motif" description="Nuclear localization signal" evidence="1">
    <location>
        <begin position="101"/>
        <end position="105"/>
    </location>
</feature>
<reference key="1">
    <citation type="journal article" date="2006" name="Science">
        <title>Large-scale sequence analysis of avian influenza isolates.</title>
        <authorList>
            <person name="Obenauer J.C."/>
            <person name="Denson J."/>
            <person name="Mehta P.K."/>
            <person name="Su X."/>
            <person name="Mukatira S."/>
            <person name="Finkelstein D.B."/>
            <person name="Xu X."/>
            <person name="Wang J."/>
            <person name="Ma J."/>
            <person name="Fan Y."/>
            <person name="Rakestraw K.M."/>
            <person name="Webster R.G."/>
            <person name="Hoffmann E."/>
            <person name="Krauss S."/>
            <person name="Zheng J."/>
            <person name="Zhang Z."/>
            <person name="Naeve C.W."/>
        </authorList>
    </citation>
    <scope>NUCLEOTIDE SEQUENCE [GENOMIC RNA]</scope>
</reference>
<accession>Q0A446</accession>
<organism>
    <name type="scientific">Influenza A virus (strain A/Duck/Germany/1949 H10N7)</name>
    <dbReference type="NCBI Taxonomy" id="382838"/>
    <lineage>
        <taxon>Viruses</taxon>
        <taxon>Riboviria</taxon>
        <taxon>Orthornavirae</taxon>
        <taxon>Negarnaviricota</taxon>
        <taxon>Polyploviricotina</taxon>
        <taxon>Insthoviricetes</taxon>
        <taxon>Articulavirales</taxon>
        <taxon>Orthomyxoviridae</taxon>
        <taxon>Alphainfluenzavirus</taxon>
        <taxon>Alphainfluenzavirus influenzae</taxon>
        <taxon>Influenza A virus</taxon>
    </lineage>
</organism>
<protein>
    <recommendedName>
        <fullName evidence="1">Matrix protein 1</fullName>
        <shortName evidence="1">M1</shortName>
    </recommendedName>
</protein>
<proteinExistence type="inferred from homology"/>
<organismHost>
    <name type="scientific">Aves</name>
    <dbReference type="NCBI Taxonomy" id="8782"/>
</organismHost>